<organism>
    <name type="scientific">Methylobacterium radiotolerans (strain ATCC 27329 / DSM 1819 / JCM 2831 / NBRC 15690 / NCIMB 10815 / 0-1)</name>
    <dbReference type="NCBI Taxonomy" id="426355"/>
    <lineage>
        <taxon>Bacteria</taxon>
        <taxon>Pseudomonadati</taxon>
        <taxon>Pseudomonadota</taxon>
        <taxon>Alphaproteobacteria</taxon>
        <taxon>Hyphomicrobiales</taxon>
        <taxon>Methylobacteriaceae</taxon>
        <taxon>Methylobacterium</taxon>
    </lineage>
</organism>
<reference key="1">
    <citation type="submission" date="2008-03" db="EMBL/GenBank/DDBJ databases">
        <title>Complete sequence of chromosome of Methylobacterium radiotolerans JCM 2831.</title>
        <authorList>
            <consortium name="US DOE Joint Genome Institute"/>
            <person name="Copeland A."/>
            <person name="Lucas S."/>
            <person name="Lapidus A."/>
            <person name="Glavina del Rio T."/>
            <person name="Dalin E."/>
            <person name="Tice H."/>
            <person name="Bruce D."/>
            <person name="Goodwin L."/>
            <person name="Pitluck S."/>
            <person name="Kiss H."/>
            <person name="Brettin T."/>
            <person name="Detter J.C."/>
            <person name="Han C."/>
            <person name="Kuske C.R."/>
            <person name="Schmutz J."/>
            <person name="Larimer F."/>
            <person name="Land M."/>
            <person name="Hauser L."/>
            <person name="Kyrpides N."/>
            <person name="Mikhailova N."/>
            <person name="Marx C.J."/>
            <person name="Richardson P."/>
        </authorList>
    </citation>
    <scope>NUCLEOTIDE SEQUENCE [LARGE SCALE GENOMIC DNA]</scope>
    <source>
        <strain>ATCC 27329 / DSM 1819 / JCM 2831 / NBRC 15690 / NCIMB 10815 / 0-1</strain>
    </source>
</reference>
<evidence type="ECO:0000255" key="1">
    <source>
        <dbReference type="HAMAP-Rule" id="MF_00178"/>
    </source>
</evidence>
<accession>B1LZB2</accession>
<dbReference type="EC" id="2.5.1.78" evidence="1"/>
<dbReference type="EMBL" id="CP001001">
    <property type="protein sequence ID" value="ACB25954.1"/>
    <property type="molecule type" value="Genomic_DNA"/>
</dbReference>
<dbReference type="RefSeq" id="WP_012320911.1">
    <property type="nucleotide sequence ID" value="NC_010505.1"/>
</dbReference>
<dbReference type="SMR" id="B1LZB2"/>
<dbReference type="STRING" id="426355.Mrad2831_3980"/>
<dbReference type="GeneID" id="6140035"/>
<dbReference type="KEGG" id="mrd:Mrad2831_3980"/>
<dbReference type="eggNOG" id="COG0054">
    <property type="taxonomic scope" value="Bacteria"/>
</dbReference>
<dbReference type="HOGENOM" id="CLU_089358_1_2_5"/>
<dbReference type="OrthoDB" id="9809709at2"/>
<dbReference type="UniPathway" id="UPA00275">
    <property type="reaction ID" value="UER00404"/>
</dbReference>
<dbReference type="Proteomes" id="UP000006589">
    <property type="component" value="Chromosome"/>
</dbReference>
<dbReference type="GO" id="GO:0005829">
    <property type="term" value="C:cytosol"/>
    <property type="evidence" value="ECO:0007669"/>
    <property type="project" value="TreeGrafter"/>
</dbReference>
<dbReference type="GO" id="GO:0009349">
    <property type="term" value="C:riboflavin synthase complex"/>
    <property type="evidence" value="ECO:0007669"/>
    <property type="project" value="InterPro"/>
</dbReference>
<dbReference type="GO" id="GO:0000906">
    <property type="term" value="F:6,7-dimethyl-8-ribityllumazine synthase activity"/>
    <property type="evidence" value="ECO:0007669"/>
    <property type="project" value="UniProtKB-UniRule"/>
</dbReference>
<dbReference type="GO" id="GO:0009231">
    <property type="term" value="P:riboflavin biosynthetic process"/>
    <property type="evidence" value="ECO:0007669"/>
    <property type="project" value="UniProtKB-UniRule"/>
</dbReference>
<dbReference type="CDD" id="cd09209">
    <property type="entry name" value="Lumazine_synthase-I"/>
    <property type="match status" value="1"/>
</dbReference>
<dbReference type="Gene3D" id="3.40.50.960">
    <property type="entry name" value="Lumazine/riboflavin synthase"/>
    <property type="match status" value="1"/>
</dbReference>
<dbReference type="HAMAP" id="MF_00178">
    <property type="entry name" value="Lumazine_synth"/>
    <property type="match status" value="1"/>
</dbReference>
<dbReference type="InterPro" id="IPR034964">
    <property type="entry name" value="LS"/>
</dbReference>
<dbReference type="InterPro" id="IPR002180">
    <property type="entry name" value="LS/RS"/>
</dbReference>
<dbReference type="InterPro" id="IPR036467">
    <property type="entry name" value="LS/RS_sf"/>
</dbReference>
<dbReference type="NCBIfam" id="TIGR00114">
    <property type="entry name" value="lumazine-synth"/>
    <property type="match status" value="1"/>
</dbReference>
<dbReference type="PANTHER" id="PTHR21058:SF0">
    <property type="entry name" value="6,7-DIMETHYL-8-RIBITYLLUMAZINE SYNTHASE"/>
    <property type="match status" value="1"/>
</dbReference>
<dbReference type="PANTHER" id="PTHR21058">
    <property type="entry name" value="6,7-DIMETHYL-8-RIBITYLLUMAZINE SYNTHASE DMRL SYNTHASE LUMAZINE SYNTHASE"/>
    <property type="match status" value="1"/>
</dbReference>
<dbReference type="Pfam" id="PF00885">
    <property type="entry name" value="DMRL_synthase"/>
    <property type="match status" value="1"/>
</dbReference>
<dbReference type="SUPFAM" id="SSF52121">
    <property type="entry name" value="Lumazine synthase"/>
    <property type="match status" value="1"/>
</dbReference>
<feature type="chain" id="PRO_1000195500" description="6,7-dimethyl-8-ribityllumazine synthase">
    <location>
        <begin position="1"/>
        <end position="164"/>
    </location>
</feature>
<feature type="active site" description="Proton donor" evidence="1">
    <location>
        <position position="93"/>
    </location>
</feature>
<feature type="binding site" evidence="1">
    <location>
        <position position="30"/>
    </location>
    <ligand>
        <name>5-amino-6-(D-ribitylamino)uracil</name>
        <dbReference type="ChEBI" id="CHEBI:15934"/>
    </ligand>
</feature>
<feature type="binding site" evidence="1">
    <location>
        <begin position="61"/>
        <end position="63"/>
    </location>
    <ligand>
        <name>5-amino-6-(D-ribitylamino)uracil</name>
        <dbReference type="ChEBI" id="CHEBI:15934"/>
    </ligand>
</feature>
<feature type="binding site" evidence="1">
    <location>
        <begin position="85"/>
        <end position="87"/>
    </location>
    <ligand>
        <name>5-amino-6-(D-ribitylamino)uracil</name>
        <dbReference type="ChEBI" id="CHEBI:15934"/>
    </ligand>
</feature>
<feature type="binding site" evidence="1">
    <location>
        <begin position="90"/>
        <end position="91"/>
    </location>
    <ligand>
        <name>(2S)-2-hydroxy-3-oxobutyl phosphate</name>
        <dbReference type="ChEBI" id="CHEBI:58830"/>
    </ligand>
</feature>
<feature type="binding site" evidence="1">
    <location>
        <position position="118"/>
    </location>
    <ligand>
        <name>5-amino-6-(D-ribitylamino)uracil</name>
        <dbReference type="ChEBI" id="CHEBI:15934"/>
    </ligand>
</feature>
<feature type="binding site" evidence="1">
    <location>
        <position position="132"/>
    </location>
    <ligand>
        <name>(2S)-2-hydroxy-3-oxobutyl phosphate</name>
        <dbReference type="ChEBI" id="CHEBI:58830"/>
    </ligand>
</feature>
<keyword id="KW-0686">Riboflavin biosynthesis</keyword>
<keyword id="KW-0808">Transferase</keyword>
<sequence length="164" mass="16679">MVAHTRADSAPKPTDPALAGARILVVEARYYDAIADELLAGALAAIEAADARATVVTVPGALEIPAAAAILLDTGAYDAVVALGCVIRGETGHYDIVAGESARALMDLSVQRRVPLGNGILTVETEAQALARARVAEMNKGGGAAEAALGVLALKRMADGARPR</sequence>
<proteinExistence type="inferred from homology"/>
<comment type="function">
    <text evidence="1">Catalyzes the formation of 6,7-dimethyl-8-ribityllumazine by condensation of 5-amino-6-(D-ribitylamino)uracil with 3,4-dihydroxy-2-butanone 4-phosphate. This is the penultimate step in the biosynthesis of riboflavin.</text>
</comment>
<comment type="catalytic activity">
    <reaction evidence="1">
        <text>(2S)-2-hydroxy-3-oxobutyl phosphate + 5-amino-6-(D-ribitylamino)uracil = 6,7-dimethyl-8-(1-D-ribityl)lumazine + phosphate + 2 H2O + H(+)</text>
        <dbReference type="Rhea" id="RHEA:26152"/>
        <dbReference type="ChEBI" id="CHEBI:15377"/>
        <dbReference type="ChEBI" id="CHEBI:15378"/>
        <dbReference type="ChEBI" id="CHEBI:15934"/>
        <dbReference type="ChEBI" id="CHEBI:43474"/>
        <dbReference type="ChEBI" id="CHEBI:58201"/>
        <dbReference type="ChEBI" id="CHEBI:58830"/>
        <dbReference type="EC" id="2.5.1.78"/>
    </reaction>
</comment>
<comment type="pathway">
    <text evidence="1">Cofactor biosynthesis; riboflavin biosynthesis; riboflavin from 2-hydroxy-3-oxobutyl phosphate and 5-amino-6-(D-ribitylamino)uracil: step 1/2.</text>
</comment>
<comment type="similarity">
    <text evidence="1">Belongs to the DMRL synthase family.</text>
</comment>
<gene>
    <name evidence="1" type="primary">ribH</name>
    <name type="ordered locus">Mrad2831_3980</name>
</gene>
<protein>
    <recommendedName>
        <fullName evidence="1">6,7-dimethyl-8-ribityllumazine synthase</fullName>
        <shortName evidence="1">DMRL synthase</shortName>
        <shortName evidence="1">LS</shortName>
        <shortName evidence="1">Lumazine synthase</shortName>
        <ecNumber evidence="1">2.5.1.78</ecNumber>
    </recommendedName>
</protein>
<name>RISB_METRJ</name>